<proteinExistence type="inferred from homology"/>
<keyword id="KW-0067">ATP-binding</keyword>
<keyword id="KW-0347">Helicase</keyword>
<keyword id="KW-0378">Hydrolase</keyword>
<keyword id="KW-0547">Nucleotide-binding</keyword>
<keyword id="KW-1185">Reference proteome</keyword>
<protein>
    <recommendedName>
        <fullName>Putative helicase 109L</fullName>
        <ecNumber>3.6.4.-</ecNumber>
    </recommendedName>
</protein>
<gene>
    <name type="ORF">IIV3-109L</name>
</gene>
<sequence length="329" mass="37492">MACIIHTNRHNDTVLSKLQKDLSKSIEIGNKKYGGGQLKTVYVYQLDESVESRPCNIPFFYGLRLAKTNADVRIERPERKELATMGKRFVGTLRDEQTVSRNQALTLLTQHKSCILSCYTGFGKTVTAINMASKIKLPTLIAVPKKPLLAQWEQEIAKFIPTATVVVVDPSKIKSLPPQPECDFCIINTCNLEKLVKHDPKFVKTFGFLIVDEAHLQMTETMAENLLHVTPRYLLGITATPYRDDGYHVLFDMFFGPEMVKIKLNKKHTVYKVKTGFCPDESRYKKKKTLFHLPSRKSIGTPYWRSRPPIRKGTGSSWTLLRASRRAPF</sequence>
<organism>
    <name type="scientific">Invertebrate iridescent virus 3</name>
    <name type="common">IIV-3</name>
    <name type="synonym">Mosquito iridescent virus</name>
    <dbReference type="NCBI Taxonomy" id="345201"/>
    <lineage>
        <taxon>Viruses</taxon>
        <taxon>Varidnaviria</taxon>
        <taxon>Bamfordvirae</taxon>
        <taxon>Nucleocytoviricota</taxon>
        <taxon>Megaviricetes</taxon>
        <taxon>Pimascovirales</taxon>
        <taxon>Iridoviridae</taxon>
        <taxon>Betairidovirinae</taxon>
        <taxon>Chloriridovirus</taxon>
    </lineage>
</organism>
<comment type="similarity">
    <text evidence="2">Belongs to the DEAD box helicase family. DEAH subfamily.</text>
</comment>
<reference key="1">
    <citation type="journal article" date="2006" name="J. Virol.">
        <title>Genome of invertebrate iridescent virus type 3 (mosquito iridescent virus).</title>
        <authorList>
            <person name="Delhon G."/>
            <person name="Tulman E.R."/>
            <person name="Afonso C.L."/>
            <person name="Lu Z."/>
            <person name="Becnel J.J."/>
            <person name="Moser B.A."/>
            <person name="Kutish G.F."/>
            <person name="Rock D.L."/>
        </authorList>
    </citation>
    <scope>NUCLEOTIDE SEQUENCE [LARGE SCALE GENOMIC DNA]</scope>
</reference>
<evidence type="ECO:0000255" key="1">
    <source>
        <dbReference type="PROSITE-ProRule" id="PRU00541"/>
    </source>
</evidence>
<evidence type="ECO:0000305" key="2"/>
<dbReference type="EC" id="3.6.4.-"/>
<dbReference type="EMBL" id="DQ643392">
    <property type="protein sequence ID" value="ABF82139.1"/>
    <property type="molecule type" value="Genomic_DNA"/>
</dbReference>
<dbReference type="RefSeq" id="YP_654681.1">
    <property type="nucleotide sequence ID" value="NC_008187.1"/>
</dbReference>
<dbReference type="SMR" id="Q196V1"/>
<dbReference type="KEGG" id="vg:4156320"/>
<dbReference type="OrthoDB" id="4131at10239"/>
<dbReference type="Proteomes" id="UP000001358">
    <property type="component" value="Genome"/>
</dbReference>
<dbReference type="GO" id="GO:0005524">
    <property type="term" value="F:ATP binding"/>
    <property type="evidence" value="ECO:0007669"/>
    <property type="project" value="UniProtKB-KW"/>
</dbReference>
<dbReference type="GO" id="GO:0003677">
    <property type="term" value="F:DNA binding"/>
    <property type="evidence" value="ECO:0007669"/>
    <property type="project" value="InterPro"/>
</dbReference>
<dbReference type="GO" id="GO:0004386">
    <property type="term" value="F:helicase activity"/>
    <property type="evidence" value="ECO:0007669"/>
    <property type="project" value="UniProtKB-KW"/>
</dbReference>
<dbReference type="GO" id="GO:0016787">
    <property type="term" value="F:hydrolase activity"/>
    <property type="evidence" value="ECO:0007669"/>
    <property type="project" value="UniProtKB-KW"/>
</dbReference>
<dbReference type="Gene3D" id="3.40.50.300">
    <property type="entry name" value="P-loop containing nucleotide triphosphate hydrolases"/>
    <property type="match status" value="1"/>
</dbReference>
<dbReference type="InterPro" id="IPR050615">
    <property type="entry name" value="ATP-dep_DNA_Helicase"/>
</dbReference>
<dbReference type="InterPro" id="IPR006935">
    <property type="entry name" value="Helicase/UvrB_N"/>
</dbReference>
<dbReference type="InterPro" id="IPR014001">
    <property type="entry name" value="Helicase_ATP-bd"/>
</dbReference>
<dbReference type="InterPro" id="IPR027417">
    <property type="entry name" value="P-loop_NTPase"/>
</dbReference>
<dbReference type="PANTHER" id="PTHR11274:SF0">
    <property type="entry name" value="GENERAL TRANSCRIPTION AND DNA REPAIR FACTOR IIH HELICASE SUBUNIT XPB"/>
    <property type="match status" value="1"/>
</dbReference>
<dbReference type="PANTHER" id="PTHR11274">
    <property type="entry name" value="RAD25/XP-B DNA REPAIR HELICASE"/>
    <property type="match status" value="1"/>
</dbReference>
<dbReference type="Pfam" id="PF04851">
    <property type="entry name" value="ResIII"/>
    <property type="match status" value="1"/>
</dbReference>
<dbReference type="SMART" id="SM00487">
    <property type="entry name" value="DEXDc"/>
    <property type="match status" value="1"/>
</dbReference>
<dbReference type="SUPFAM" id="SSF52540">
    <property type="entry name" value="P-loop containing nucleoside triphosphate hydrolases"/>
    <property type="match status" value="1"/>
</dbReference>
<dbReference type="PROSITE" id="PS51192">
    <property type="entry name" value="HELICASE_ATP_BIND_1"/>
    <property type="match status" value="1"/>
</dbReference>
<organismHost>
    <name type="scientific">Aedes vexans</name>
    <name type="common">Inland floodwater mosquito</name>
    <name type="synonym">Culex vexans</name>
    <dbReference type="NCBI Taxonomy" id="7163"/>
</organismHost>
<organismHost>
    <name type="scientific">Culex territans</name>
    <dbReference type="NCBI Taxonomy" id="42431"/>
</organismHost>
<organismHost>
    <name type="scientific">Culiseta annulata</name>
    <dbReference type="NCBI Taxonomy" id="332058"/>
</organismHost>
<organismHost>
    <name type="scientific">Ochlerotatus sollicitans</name>
    <name type="common">eastern saltmarsh mosquito</name>
    <dbReference type="NCBI Taxonomy" id="310513"/>
</organismHost>
<organismHost>
    <name type="scientific">Ochlerotatus taeniorhynchus</name>
    <name type="common">Black salt marsh mosquito</name>
    <name type="synonym">Aedes taeniorhynchus</name>
    <dbReference type="NCBI Taxonomy" id="329105"/>
</organismHost>
<organismHost>
    <name type="scientific">Psorophora ferox</name>
    <dbReference type="NCBI Taxonomy" id="7183"/>
</organismHost>
<name>VF161_IIV3</name>
<feature type="chain" id="PRO_0000376957" description="Putative helicase 109L">
    <location>
        <begin position="1"/>
        <end position="329"/>
    </location>
</feature>
<feature type="domain" description="Helicase ATP-binding" evidence="1">
    <location>
        <begin position="105"/>
        <end position="259"/>
    </location>
</feature>
<feature type="short sequence motif" description="DEAH box">
    <location>
        <begin position="212"/>
        <end position="215"/>
    </location>
</feature>
<feature type="binding site" evidence="1">
    <location>
        <begin position="118"/>
        <end position="125"/>
    </location>
    <ligand>
        <name>ATP</name>
        <dbReference type="ChEBI" id="CHEBI:30616"/>
    </ligand>
</feature>
<accession>Q196V1</accession>